<proteinExistence type="inferred from homology"/>
<protein>
    <recommendedName>
        <fullName evidence="1">Tetraacyldisaccharide 4'-kinase</fullName>
        <ecNumber evidence="1">2.7.1.130</ecNumber>
    </recommendedName>
    <alternativeName>
        <fullName evidence="1">Lipid A 4'-kinase</fullName>
    </alternativeName>
</protein>
<comment type="function">
    <text evidence="1">Transfers the gamma-phosphate of ATP to the 4'-position of a tetraacyldisaccharide 1-phosphate intermediate (termed DS-1-P) to form tetraacyldisaccharide 1,4'-bis-phosphate (lipid IVA).</text>
</comment>
<comment type="catalytic activity">
    <reaction evidence="1">
        <text>a lipid A disaccharide + ATP = a lipid IVA + ADP + H(+)</text>
        <dbReference type="Rhea" id="RHEA:67840"/>
        <dbReference type="ChEBI" id="CHEBI:15378"/>
        <dbReference type="ChEBI" id="CHEBI:30616"/>
        <dbReference type="ChEBI" id="CHEBI:176343"/>
        <dbReference type="ChEBI" id="CHEBI:176425"/>
        <dbReference type="ChEBI" id="CHEBI:456216"/>
        <dbReference type="EC" id="2.7.1.130"/>
    </reaction>
</comment>
<comment type="pathway">
    <text evidence="1">Glycolipid biosynthesis; lipid IV(A) biosynthesis; lipid IV(A) from (3R)-3-hydroxytetradecanoyl-[acyl-carrier-protein] and UDP-N-acetyl-alpha-D-glucosamine: step 6/6.</text>
</comment>
<comment type="similarity">
    <text evidence="1">Belongs to the LpxK family.</text>
</comment>
<name>LPXK_IDILO</name>
<evidence type="ECO:0000255" key="1">
    <source>
        <dbReference type="HAMAP-Rule" id="MF_00409"/>
    </source>
</evidence>
<sequence>MWLQKQWYKARLHPLLFLLTPLSLVFWLVTNLRRSFYALGLMPRYKADVPVIVVGNISVGGTGKTPMVVALSQWLKDEGWNPGIISRGYGAKGPFPYEVLESDSPEKAGDEPLLMRRRTGCPVVIAPKRAQAAKLMAEQHPKVDVIICDDGLQHYALKRDIELIMIDAERGTGNGWLLPAGPLREGPWRLKGADWVISNYGRHAFARHVVDVEPGNWYRVDNNEQVALKTESKFNAVAGIGYPQRFFNSLIEQGIELENSQSFADHHAFSQQDFSNLASNPILMTEKDAGKCQSFAQADWYYQTIEAKLPEVMKTNLLAELERKKNGHR</sequence>
<reference key="1">
    <citation type="journal article" date="2004" name="Proc. Natl. Acad. Sci. U.S.A.">
        <title>Genome sequence of the deep-sea gamma-proteobacterium Idiomarina loihiensis reveals amino acid fermentation as a source of carbon and energy.</title>
        <authorList>
            <person name="Hou S."/>
            <person name="Saw J.H."/>
            <person name="Lee K.S."/>
            <person name="Freitas T.A."/>
            <person name="Belisle C."/>
            <person name="Kawarabayasi Y."/>
            <person name="Donachie S.P."/>
            <person name="Pikina A."/>
            <person name="Galperin M.Y."/>
            <person name="Koonin E.V."/>
            <person name="Makarova K.S."/>
            <person name="Omelchenko M.V."/>
            <person name="Sorokin A."/>
            <person name="Wolf Y.I."/>
            <person name="Li Q.X."/>
            <person name="Keum Y.S."/>
            <person name="Campbell S."/>
            <person name="Denery J."/>
            <person name="Aizawa S."/>
            <person name="Shibata S."/>
            <person name="Malahoff A."/>
            <person name="Alam M."/>
        </authorList>
    </citation>
    <scope>NUCLEOTIDE SEQUENCE [LARGE SCALE GENOMIC DNA]</scope>
    <source>
        <strain>ATCC BAA-735 / DSM 15497 / L2-TR</strain>
    </source>
</reference>
<feature type="chain" id="PRO_0000229959" description="Tetraacyldisaccharide 4'-kinase">
    <location>
        <begin position="1"/>
        <end position="329"/>
    </location>
</feature>
<feature type="binding site" evidence="1">
    <location>
        <begin position="58"/>
        <end position="65"/>
    </location>
    <ligand>
        <name>ATP</name>
        <dbReference type="ChEBI" id="CHEBI:30616"/>
    </ligand>
</feature>
<keyword id="KW-0067">ATP-binding</keyword>
<keyword id="KW-0418">Kinase</keyword>
<keyword id="KW-0441">Lipid A biosynthesis</keyword>
<keyword id="KW-0444">Lipid biosynthesis</keyword>
<keyword id="KW-0443">Lipid metabolism</keyword>
<keyword id="KW-0547">Nucleotide-binding</keyword>
<keyword id="KW-1185">Reference proteome</keyword>
<keyword id="KW-0808">Transferase</keyword>
<accession>Q5QU37</accession>
<gene>
    <name evidence="1" type="primary">lpxK</name>
    <name type="ordered locus">IL1512</name>
</gene>
<dbReference type="EC" id="2.7.1.130" evidence="1"/>
<dbReference type="EMBL" id="AE017340">
    <property type="protein sequence ID" value="AAV82350.1"/>
    <property type="molecule type" value="Genomic_DNA"/>
</dbReference>
<dbReference type="RefSeq" id="WP_011234755.1">
    <property type="nucleotide sequence ID" value="NC_006512.1"/>
</dbReference>
<dbReference type="SMR" id="Q5QU37"/>
<dbReference type="STRING" id="283942.IL1512"/>
<dbReference type="GeneID" id="41336689"/>
<dbReference type="KEGG" id="ilo:IL1512"/>
<dbReference type="eggNOG" id="COG1663">
    <property type="taxonomic scope" value="Bacteria"/>
</dbReference>
<dbReference type="HOGENOM" id="CLU_038816_2_0_6"/>
<dbReference type="OrthoDB" id="9766423at2"/>
<dbReference type="UniPathway" id="UPA00359">
    <property type="reaction ID" value="UER00482"/>
</dbReference>
<dbReference type="Proteomes" id="UP000001171">
    <property type="component" value="Chromosome"/>
</dbReference>
<dbReference type="GO" id="GO:0005886">
    <property type="term" value="C:plasma membrane"/>
    <property type="evidence" value="ECO:0007669"/>
    <property type="project" value="TreeGrafter"/>
</dbReference>
<dbReference type="GO" id="GO:0005524">
    <property type="term" value="F:ATP binding"/>
    <property type="evidence" value="ECO:0007669"/>
    <property type="project" value="UniProtKB-UniRule"/>
</dbReference>
<dbReference type="GO" id="GO:0009029">
    <property type="term" value="F:tetraacyldisaccharide 4'-kinase activity"/>
    <property type="evidence" value="ECO:0007669"/>
    <property type="project" value="UniProtKB-UniRule"/>
</dbReference>
<dbReference type="GO" id="GO:0009245">
    <property type="term" value="P:lipid A biosynthetic process"/>
    <property type="evidence" value="ECO:0007669"/>
    <property type="project" value="UniProtKB-UniRule"/>
</dbReference>
<dbReference type="GO" id="GO:0009244">
    <property type="term" value="P:lipopolysaccharide core region biosynthetic process"/>
    <property type="evidence" value="ECO:0007669"/>
    <property type="project" value="TreeGrafter"/>
</dbReference>
<dbReference type="HAMAP" id="MF_00409">
    <property type="entry name" value="LpxK"/>
    <property type="match status" value="1"/>
</dbReference>
<dbReference type="InterPro" id="IPR003758">
    <property type="entry name" value="LpxK"/>
</dbReference>
<dbReference type="InterPro" id="IPR027417">
    <property type="entry name" value="P-loop_NTPase"/>
</dbReference>
<dbReference type="NCBIfam" id="TIGR00682">
    <property type="entry name" value="lpxK"/>
    <property type="match status" value="1"/>
</dbReference>
<dbReference type="PANTHER" id="PTHR42724">
    <property type="entry name" value="TETRAACYLDISACCHARIDE 4'-KINASE"/>
    <property type="match status" value="1"/>
</dbReference>
<dbReference type="PANTHER" id="PTHR42724:SF1">
    <property type="entry name" value="TETRAACYLDISACCHARIDE 4'-KINASE, MITOCHONDRIAL-RELATED"/>
    <property type="match status" value="1"/>
</dbReference>
<dbReference type="Pfam" id="PF02606">
    <property type="entry name" value="LpxK"/>
    <property type="match status" value="1"/>
</dbReference>
<dbReference type="SUPFAM" id="SSF52540">
    <property type="entry name" value="P-loop containing nucleoside triphosphate hydrolases"/>
    <property type="match status" value="1"/>
</dbReference>
<organism>
    <name type="scientific">Idiomarina loihiensis (strain ATCC BAA-735 / DSM 15497 / L2-TR)</name>
    <dbReference type="NCBI Taxonomy" id="283942"/>
    <lineage>
        <taxon>Bacteria</taxon>
        <taxon>Pseudomonadati</taxon>
        <taxon>Pseudomonadota</taxon>
        <taxon>Gammaproteobacteria</taxon>
        <taxon>Alteromonadales</taxon>
        <taxon>Idiomarinaceae</taxon>
        <taxon>Idiomarina</taxon>
    </lineage>
</organism>